<comment type="subcellular location">
    <subcellularLocation>
        <location evidence="2">Cell membrane</location>
        <topology evidence="2">Multi-pass membrane protein</topology>
    </subcellularLocation>
</comment>
<comment type="similarity">
    <text evidence="2">To B.subtilis ComEC.</text>
</comment>
<feature type="chain" id="PRO_0000210532" description="Uncharacterized protein MG316">
    <location>
        <begin position="1"/>
        <end position="369"/>
    </location>
</feature>
<feature type="transmembrane region" description="Helical" evidence="1">
    <location>
        <begin position="25"/>
        <end position="45"/>
    </location>
</feature>
<feature type="transmembrane region" description="Helical" evidence="1">
    <location>
        <begin position="47"/>
        <end position="67"/>
    </location>
</feature>
<feature type="transmembrane region" description="Helical" evidence="1">
    <location>
        <begin position="119"/>
        <end position="139"/>
    </location>
</feature>
<feature type="transmembrane region" description="Helical" evidence="1">
    <location>
        <begin position="152"/>
        <end position="172"/>
    </location>
</feature>
<feature type="transmembrane region" description="Helical" evidence="1">
    <location>
        <begin position="206"/>
        <end position="226"/>
    </location>
</feature>
<feature type="transmembrane region" description="Helical" evidence="1">
    <location>
        <begin position="235"/>
        <end position="255"/>
    </location>
</feature>
<feature type="transmembrane region" description="Helical" evidence="1">
    <location>
        <begin position="272"/>
        <end position="292"/>
    </location>
</feature>
<feature type="transmembrane region" description="Helical" evidence="1">
    <location>
        <begin position="296"/>
        <end position="316"/>
    </location>
</feature>
<feature type="transmembrane region" description="Helical" evidence="1">
    <location>
        <begin position="323"/>
        <end position="343"/>
    </location>
</feature>
<feature type="sequence conflict" description="In Ref. 2." evidence="2" ref="2">
    <original>NIVHLFVISG</original>
    <variation>KHCPFVCYQW</variation>
    <location>
        <begin position="120"/>
        <end position="129"/>
    </location>
</feature>
<reference key="1">
    <citation type="journal article" date="1995" name="Science">
        <title>The minimal gene complement of Mycoplasma genitalium.</title>
        <authorList>
            <person name="Fraser C.M."/>
            <person name="Gocayne J.D."/>
            <person name="White O."/>
            <person name="Adams M.D."/>
            <person name="Clayton R.A."/>
            <person name="Fleischmann R.D."/>
            <person name="Bult C.J."/>
            <person name="Kerlavage A.R."/>
            <person name="Sutton G.G."/>
            <person name="Kelley J.M."/>
            <person name="Fritchman J.L."/>
            <person name="Weidman J.F."/>
            <person name="Small K.V."/>
            <person name="Sandusky M."/>
            <person name="Fuhrmann J.L."/>
            <person name="Nguyen D.T."/>
            <person name="Utterback T.R."/>
            <person name="Saudek D.M."/>
            <person name="Phillips C.A."/>
            <person name="Merrick J.M."/>
            <person name="Tomb J.-F."/>
            <person name="Dougherty B.A."/>
            <person name="Bott K.F."/>
            <person name="Hu P.-C."/>
            <person name="Lucier T.S."/>
            <person name="Peterson S.N."/>
            <person name="Smith H.O."/>
            <person name="Hutchison C.A. III"/>
            <person name="Venter J.C."/>
        </authorList>
    </citation>
    <scope>NUCLEOTIDE SEQUENCE [LARGE SCALE GENOMIC DNA]</scope>
    <source>
        <strain>ATCC 33530 / DSM 19775 / NCTC 10195 / G37</strain>
    </source>
</reference>
<reference key="2">
    <citation type="journal article" date="1995" name="J. Bacteriol.">
        <title>Molecular cloning and characterization of an adherence-related operon of Mycoplasma genitalium.</title>
        <authorList>
            <person name="Reddy S.P."/>
            <person name="Rasmussen W.G."/>
            <person name="Baseman J.B."/>
        </authorList>
    </citation>
    <scope>NUCLEOTIDE SEQUENCE [GENOMIC DNA] OF 1-129</scope>
    <source>
        <strain>ATCC 33530 / DSM 19775 / NCTC 10195 / G37</strain>
    </source>
</reference>
<sequence length="369" mass="43195">MQTKLFYFFVLLSFIPGFFLVQQEQFVALSIWIILITLFSLWYDWKFCLLNLTIVGFFIAFCYFVPAVKINQIVKNNFIRTPFINWIDQTTKGELNQYLKLFLINETTKNNLYQNALKLNIVHLFVISGFHLSFLFNLMERFLWKRWYLNKLSGFAVLLIYLFLVGFAFSALRVFISTLLKQVFKKQLPEDNLSLTALLIILISNHALNNFGFNFSFLACFVLLFVNKLKLLKALKPLVSSSLILIVISPLSLYLNSRLNAFSVLFNLLFSPIALFYFCVSWIILPFIGVFGQASFGIYLPLKMLSEWSLKVTVFLQIPKPNLIFFFVYYGLLGLLYTIFTVAYYDNNLWSRYWANSPKIKSNQKQFSI</sequence>
<evidence type="ECO:0000255" key="1"/>
<evidence type="ECO:0000305" key="2"/>
<gene>
    <name type="ordered locus">MG316</name>
</gene>
<keyword id="KW-1003">Cell membrane</keyword>
<keyword id="KW-0472">Membrane</keyword>
<keyword id="KW-1185">Reference proteome</keyword>
<keyword id="KW-0812">Transmembrane</keyword>
<keyword id="KW-1133">Transmembrane helix</keyword>
<organism>
    <name type="scientific">Mycoplasma genitalium (strain ATCC 33530 / DSM 19775 / NCTC 10195 / G37)</name>
    <name type="common">Mycoplasmoides genitalium</name>
    <dbReference type="NCBI Taxonomy" id="243273"/>
    <lineage>
        <taxon>Bacteria</taxon>
        <taxon>Bacillati</taxon>
        <taxon>Mycoplasmatota</taxon>
        <taxon>Mycoplasmoidales</taxon>
        <taxon>Mycoplasmoidaceae</taxon>
        <taxon>Mycoplasmoides</taxon>
    </lineage>
</organism>
<name>Y316_MYCGE</name>
<proteinExistence type="predicted"/>
<protein>
    <recommendedName>
        <fullName>Uncharacterized protein MG316</fullName>
    </recommendedName>
</protein>
<accession>P47558</accession>
<accession>Q49466</accession>
<dbReference type="EMBL" id="L43967">
    <property type="protein sequence ID" value="AAC71538.1"/>
    <property type="molecule type" value="Genomic_DNA"/>
</dbReference>
<dbReference type="EMBL" id="L43097">
    <property type="protein sequence ID" value="AAA99947.1"/>
    <property type="molecule type" value="Genomic_DNA"/>
</dbReference>
<dbReference type="PIR" id="I64234">
    <property type="entry name" value="I64234"/>
</dbReference>
<dbReference type="RefSeq" id="WP_009885990.1">
    <property type="nucleotide sequence ID" value="NC_000908.2"/>
</dbReference>
<dbReference type="STRING" id="243273.MG_316"/>
<dbReference type="GeneID" id="88282479"/>
<dbReference type="KEGG" id="mge:MG_316"/>
<dbReference type="eggNOG" id="COG0658">
    <property type="taxonomic scope" value="Bacteria"/>
</dbReference>
<dbReference type="HOGENOM" id="CLU_749679_0_0_14"/>
<dbReference type="InParanoid" id="P47558"/>
<dbReference type="OrthoDB" id="396422at2"/>
<dbReference type="BioCyc" id="MGEN243273:G1GJ2-385-MONOMER"/>
<dbReference type="Proteomes" id="UP000000807">
    <property type="component" value="Chromosome"/>
</dbReference>
<dbReference type="GO" id="GO:0005886">
    <property type="term" value="C:plasma membrane"/>
    <property type="evidence" value="ECO:0007669"/>
    <property type="project" value="UniProtKB-SubCell"/>
</dbReference>
<dbReference type="InterPro" id="IPR004477">
    <property type="entry name" value="ComEC_N"/>
</dbReference>
<dbReference type="InterPro" id="IPR052159">
    <property type="entry name" value="Competence_DNA_uptake"/>
</dbReference>
<dbReference type="NCBIfam" id="TIGR00360">
    <property type="entry name" value="ComEC_N-term"/>
    <property type="match status" value="1"/>
</dbReference>
<dbReference type="PANTHER" id="PTHR30619">
    <property type="entry name" value="DNA INTERNALIZATION/COMPETENCE PROTEIN COMEC/REC2"/>
    <property type="match status" value="1"/>
</dbReference>
<dbReference type="PANTHER" id="PTHR30619:SF1">
    <property type="entry name" value="RECOMBINATION PROTEIN 2"/>
    <property type="match status" value="1"/>
</dbReference>
<dbReference type="Pfam" id="PF03772">
    <property type="entry name" value="Competence"/>
    <property type="match status" value="1"/>
</dbReference>